<feature type="signal peptide" evidence="3">
    <location>
        <begin position="1"/>
        <end position="28"/>
    </location>
</feature>
<feature type="chain" id="PRO_0000008994" description="Fibroblast growth factor 21">
    <location>
        <begin position="29"/>
        <end position="209"/>
    </location>
</feature>
<feature type="region of interest" description="Disordered" evidence="2">
    <location>
        <begin position="143"/>
        <end position="209"/>
    </location>
</feature>
<feature type="compositionally biased region" description="Pro residues" evidence="2">
    <location>
        <begin position="168"/>
        <end position="186"/>
    </location>
</feature>
<feature type="sequence variant" id="VAR_055375" description="In dbSNP:rs41308776." evidence="8">
    <original>G</original>
    <variation>S</variation>
    <location>
        <position position="141"/>
    </location>
</feature>
<feature type="sequence variant" id="VAR_049064" description="In dbSNP:rs739320." evidence="8">
    <original>L</original>
    <variation>P</variation>
    <location>
        <position position="174"/>
    </location>
</feature>
<feature type="sequence conflict" description="In Ref. 2; AAQ89444." evidence="9" ref="2">
    <location>
        <position position="23"/>
    </location>
</feature>
<feature type="strand" evidence="11">
    <location>
        <begin position="44"/>
        <end position="51"/>
    </location>
</feature>
<feature type="helix" evidence="11">
    <location>
        <begin position="52"/>
        <end position="55"/>
    </location>
</feature>
<feature type="strand" evidence="11">
    <location>
        <begin position="60"/>
        <end position="63"/>
    </location>
</feature>
<feature type="strand" evidence="11">
    <location>
        <begin position="69"/>
        <end position="74"/>
    </location>
</feature>
<feature type="helix" evidence="11">
    <location>
        <begin position="77"/>
        <end position="79"/>
    </location>
</feature>
<feature type="strand" evidence="11">
    <location>
        <begin position="80"/>
        <end position="87"/>
    </location>
</feature>
<feature type="strand" evidence="11">
    <location>
        <begin position="90"/>
        <end position="95"/>
    </location>
</feature>
<feature type="turn" evidence="11">
    <location>
        <begin position="96"/>
        <end position="98"/>
    </location>
</feature>
<feature type="strand" evidence="11">
    <location>
        <begin position="101"/>
        <end position="104"/>
    </location>
</feature>
<feature type="strand" evidence="11">
    <location>
        <begin position="110"/>
        <end position="115"/>
    </location>
</feature>
<feature type="helix" evidence="11">
    <location>
        <begin position="118"/>
        <end position="121"/>
    </location>
</feature>
<feature type="strand" evidence="11">
    <location>
        <begin position="123"/>
        <end position="127"/>
    </location>
</feature>
<feature type="strand" evidence="11">
    <location>
        <begin position="133"/>
        <end position="136"/>
    </location>
</feature>
<feature type="turn" evidence="11">
    <location>
        <begin position="138"/>
        <end position="140"/>
    </location>
</feature>
<feature type="strand" evidence="11">
    <location>
        <begin position="152"/>
        <end position="154"/>
    </location>
</feature>
<feature type="strand" evidence="11">
    <location>
        <begin position="164"/>
        <end position="168"/>
    </location>
</feature>
<feature type="strand" evidence="10">
    <location>
        <begin position="190"/>
        <end position="192"/>
    </location>
</feature>
<feature type="turn" evidence="10">
    <location>
        <begin position="205"/>
        <end position="208"/>
    </location>
</feature>
<accession>Q9NSA1</accession>
<accession>Q8N683</accession>
<gene>
    <name type="primary">FGF21</name>
    <name type="ORF">UNQ3115/PRO10196</name>
</gene>
<keyword id="KW-0002">3D-structure</keyword>
<keyword id="KW-0903">Direct protein sequencing</keyword>
<keyword id="KW-0339">Growth factor</keyword>
<keyword id="KW-1267">Proteomics identification</keyword>
<keyword id="KW-1185">Reference proteome</keyword>
<keyword id="KW-0964">Secreted</keyword>
<keyword id="KW-0732">Signal</keyword>
<organism>
    <name type="scientific">Homo sapiens</name>
    <name type="common">Human</name>
    <dbReference type="NCBI Taxonomy" id="9606"/>
    <lineage>
        <taxon>Eukaryota</taxon>
        <taxon>Metazoa</taxon>
        <taxon>Chordata</taxon>
        <taxon>Craniata</taxon>
        <taxon>Vertebrata</taxon>
        <taxon>Euteleostomi</taxon>
        <taxon>Mammalia</taxon>
        <taxon>Eutheria</taxon>
        <taxon>Euarchontoglires</taxon>
        <taxon>Primates</taxon>
        <taxon>Haplorrhini</taxon>
        <taxon>Catarrhini</taxon>
        <taxon>Hominidae</taxon>
        <taxon>Homo</taxon>
    </lineage>
</organism>
<name>FGF21_HUMAN</name>
<reference key="1">
    <citation type="journal article" date="2000" name="Biochim. Biophys. Acta">
        <title>Identification of a novel FGF, FGF-21, preferentially expressed in the liver.</title>
        <authorList>
            <person name="Nishimura T."/>
            <person name="Nakatake Y."/>
            <person name="Konishi M."/>
            <person name="Itoh N."/>
        </authorList>
    </citation>
    <scope>NUCLEOTIDE SEQUENCE [MRNA]</scope>
</reference>
<reference key="2">
    <citation type="journal article" date="2003" name="Genome Res.">
        <title>The secreted protein discovery initiative (SPDI), a large-scale effort to identify novel human secreted and transmembrane proteins: a bioinformatics assessment.</title>
        <authorList>
            <person name="Clark H.F."/>
            <person name="Gurney A.L."/>
            <person name="Abaya E."/>
            <person name="Baker K."/>
            <person name="Baldwin D.T."/>
            <person name="Brush J."/>
            <person name="Chen J."/>
            <person name="Chow B."/>
            <person name="Chui C."/>
            <person name="Crowley C."/>
            <person name="Currell B."/>
            <person name="Deuel B."/>
            <person name="Dowd P."/>
            <person name="Eaton D."/>
            <person name="Foster J.S."/>
            <person name="Grimaldi C."/>
            <person name="Gu Q."/>
            <person name="Hass P.E."/>
            <person name="Heldens S."/>
            <person name="Huang A."/>
            <person name="Kim H.S."/>
            <person name="Klimowski L."/>
            <person name="Jin Y."/>
            <person name="Johnson S."/>
            <person name="Lee J."/>
            <person name="Lewis L."/>
            <person name="Liao D."/>
            <person name="Mark M.R."/>
            <person name="Robbie E."/>
            <person name="Sanchez C."/>
            <person name="Schoenfeld J."/>
            <person name="Seshagiri S."/>
            <person name="Simmons L."/>
            <person name="Singh J."/>
            <person name="Smith V."/>
            <person name="Stinson J."/>
            <person name="Vagts A."/>
            <person name="Vandlen R.L."/>
            <person name="Watanabe C."/>
            <person name="Wieand D."/>
            <person name="Woods K."/>
            <person name="Xie M.-H."/>
            <person name="Yansura D.G."/>
            <person name="Yi S."/>
            <person name="Yu G."/>
            <person name="Yuan J."/>
            <person name="Zhang M."/>
            <person name="Zhang Z."/>
            <person name="Goddard A.D."/>
            <person name="Wood W.I."/>
            <person name="Godowski P.J."/>
            <person name="Gray A.M."/>
        </authorList>
    </citation>
    <scope>NUCLEOTIDE SEQUENCE [LARGE SCALE MRNA]</scope>
</reference>
<reference key="3">
    <citation type="submission" date="2006-07" db="EMBL/GenBank/DDBJ databases">
        <authorList>
            <consortium name="NIEHS SNPs program"/>
        </authorList>
    </citation>
    <scope>NUCLEOTIDE SEQUENCE [GENOMIC DNA]</scope>
    <scope>VARIANTS SER-141 AND PRO-174</scope>
</reference>
<reference key="4">
    <citation type="submission" date="2005-07" db="EMBL/GenBank/DDBJ databases">
        <authorList>
            <person name="Mural R.J."/>
            <person name="Istrail S."/>
            <person name="Sutton G.G."/>
            <person name="Florea L."/>
            <person name="Halpern A.L."/>
            <person name="Mobarry C.M."/>
            <person name="Lippert R."/>
            <person name="Walenz B."/>
            <person name="Shatkay H."/>
            <person name="Dew I."/>
            <person name="Miller J.R."/>
            <person name="Flanigan M.J."/>
            <person name="Edwards N.J."/>
            <person name="Bolanos R."/>
            <person name="Fasulo D."/>
            <person name="Halldorsson B.V."/>
            <person name="Hannenhalli S."/>
            <person name="Turner R."/>
            <person name="Yooseph S."/>
            <person name="Lu F."/>
            <person name="Nusskern D.R."/>
            <person name="Shue B.C."/>
            <person name="Zheng X.H."/>
            <person name="Zhong F."/>
            <person name="Delcher A.L."/>
            <person name="Huson D.H."/>
            <person name="Kravitz S.A."/>
            <person name="Mouchard L."/>
            <person name="Reinert K."/>
            <person name="Remington K.A."/>
            <person name="Clark A.G."/>
            <person name="Waterman M.S."/>
            <person name="Eichler E.E."/>
            <person name="Adams M.D."/>
            <person name="Hunkapiller M.W."/>
            <person name="Myers E.W."/>
            <person name="Venter J.C."/>
        </authorList>
    </citation>
    <scope>NUCLEOTIDE SEQUENCE [LARGE SCALE GENOMIC DNA]</scope>
</reference>
<reference key="5">
    <citation type="journal article" date="2004" name="Genome Res.">
        <title>The status, quality, and expansion of the NIH full-length cDNA project: the Mammalian Gene Collection (MGC).</title>
        <authorList>
            <consortium name="The MGC Project Team"/>
        </authorList>
    </citation>
    <scope>NUCLEOTIDE SEQUENCE [LARGE SCALE MRNA]</scope>
    <source>
        <tissue>Lung</tissue>
    </source>
</reference>
<reference key="6">
    <citation type="journal article" date="2004" name="Protein Sci.">
        <title>Signal peptide prediction based on analysis of experimentally verified cleavage sites.</title>
        <authorList>
            <person name="Zhang Z."/>
            <person name="Henzel W.J."/>
        </authorList>
    </citation>
    <scope>PROTEIN SEQUENCE OF 29-43</scope>
</reference>
<reference key="7">
    <citation type="journal article" date="2005" name="J. Clin. Invest.">
        <title>FGF-21 as a novel metabolic regulator.</title>
        <authorList>
            <person name="Kharitonenkov A."/>
            <person name="Shiyanova T.L."/>
            <person name="Koester A."/>
            <person name="Ford A.M."/>
            <person name="Micanovic R."/>
            <person name="Galbreath E.J."/>
            <person name="Sandusky G.E."/>
            <person name="Hammond L.J."/>
            <person name="Moyers J.S."/>
            <person name="Owens R.A."/>
            <person name="Gromada J."/>
            <person name="Brozinick J.T."/>
            <person name="Hawkins E.D."/>
            <person name="Wroblewski V.J."/>
            <person name="Li D.-S."/>
            <person name="Mehrbod F."/>
            <person name="Jaskunas S.R."/>
            <person name="Shanafelt A.B."/>
        </authorList>
    </citation>
    <scope>FUNCTION</scope>
    <scope>INTERACTION WITH FGFR4 AND KLB</scope>
</reference>
<reference key="8">
    <citation type="journal article" date="2007" name="J. Biol. Chem.">
        <title>Tissue-specific expression of betaKlotho and fibroblast growth factor (FGF) receptor isoforms determines metabolic activity of FGF19 and FGF21.</title>
        <authorList>
            <person name="Kurosu H."/>
            <person name="Choi M."/>
            <person name="Ogawa Y."/>
            <person name="Dickson A.S."/>
            <person name="Goetz R."/>
            <person name="Eliseenkova A.V."/>
            <person name="Mohammadi M."/>
            <person name="Rosenblatt K.P."/>
            <person name="Kliewer S.A."/>
            <person name="Kuro-o M."/>
        </authorList>
    </citation>
    <scope>FUNCTION</scope>
</reference>
<reference key="9">
    <citation type="journal article" date="2008" name="J. Biol. Chem.">
        <title>C-terminal tail of FGF19 determines its specificity toward Klotho co-receptors.</title>
        <authorList>
            <person name="Wu X."/>
            <person name="Lemon B."/>
            <person name="Li X."/>
            <person name="Gupte J."/>
            <person name="Weiszmann J."/>
            <person name="Stevens J."/>
            <person name="Hawkins N."/>
            <person name="Shen W."/>
            <person name="Lindberg R."/>
            <person name="Chen J.-L."/>
            <person name="Tian H."/>
            <person name="Li Y."/>
        </authorList>
    </citation>
    <scope>INTERACTION WITH KLB</scope>
</reference>
<reference key="10">
    <citation type="journal article" date="2009" name="J. Cell. Physiol.">
        <title>Different roles of N- and C- termini in the functional activity of FGF21.</title>
        <authorList>
            <person name="Micanovic R."/>
            <person name="Raches D.W."/>
            <person name="Dunbar J.D."/>
            <person name="Driver D.A."/>
            <person name="Bina H.A."/>
            <person name="Dickinson C.D."/>
            <person name="Kharitonenkov A."/>
        </authorList>
    </citation>
    <scope>INTERACTION WITH KLB</scope>
</reference>
<reference key="11">
    <citation type="journal article" date="2010" name="Nat. Rev. Cancer">
        <title>Fibroblast growth factor signalling: from development to cancer.</title>
        <authorList>
            <person name="Turner N."/>
            <person name="Grose R."/>
        </authorList>
    </citation>
    <scope>REVIEW</scope>
</reference>
<protein>
    <recommendedName>
        <fullName>Fibroblast growth factor 21</fullName>
        <shortName>FGF-21</shortName>
    </recommendedName>
</protein>
<evidence type="ECO:0000250" key="1">
    <source>
        <dbReference type="UniProtKB" id="Q9JJN1"/>
    </source>
</evidence>
<evidence type="ECO:0000256" key="2">
    <source>
        <dbReference type="SAM" id="MobiDB-lite"/>
    </source>
</evidence>
<evidence type="ECO:0000269" key="3">
    <source>
    </source>
</evidence>
<evidence type="ECO:0000269" key="4">
    <source>
    </source>
</evidence>
<evidence type="ECO:0000269" key="5">
    <source>
    </source>
</evidence>
<evidence type="ECO:0000269" key="6">
    <source>
    </source>
</evidence>
<evidence type="ECO:0000269" key="7">
    <source>
    </source>
</evidence>
<evidence type="ECO:0000269" key="8">
    <source ref="3"/>
</evidence>
<evidence type="ECO:0000305" key="9"/>
<evidence type="ECO:0007829" key="10">
    <source>
        <dbReference type="PDB" id="5VAQ"/>
    </source>
</evidence>
<evidence type="ECO:0007829" key="11">
    <source>
        <dbReference type="PDB" id="6M6E"/>
    </source>
</evidence>
<sequence>MDSDETGFEHSGLWVSVLAGLLLGACQAHPIPDSSPLLQFGGQVRQRYLYTDDAQQTEAHLEIREDGTVGGAADQSPESLLQLKALKPGVIQILGVKTSRFLCQRPDGALYGSLHFDPEACSFRELLLEDGYNVYQSEAHGLPLHLPGNKSPHRDPAPRGPARFLPLPGLPPALPEPPGILAPQPPDVGSSDPLSMVGPSQGRSPSYAS</sequence>
<proteinExistence type="evidence at protein level"/>
<dbReference type="EMBL" id="AB021975">
    <property type="protein sequence ID" value="BAA99415.1"/>
    <property type="molecule type" value="mRNA"/>
</dbReference>
<dbReference type="EMBL" id="AY359086">
    <property type="protein sequence ID" value="AAQ89444.1"/>
    <property type="molecule type" value="mRNA"/>
</dbReference>
<dbReference type="EMBL" id="DQ847413">
    <property type="protein sequence ID" value="ABI75345.1"/>
    <property type="molecule type" value="Genomic_DNA"/>
</dbReference>
<dbReference type="EMBL" id="CH471177">
    <property type="protein sequence ID" value="EAW52402.1"/>
    <property type="molecule type" value="Genomic_DNA"/>
</dbReference>
<dbReference type="EMBL" id="BC018404">
    <property type="protein sequence ID" value="AAH18404.1"/>
    <property type="molecule type" value="mRNA"/>
</dbReference>
<dbReference type="CCDS" id="CCDS12734.1"/>
<dbReference type="RefSeq" id="NP_061986.1">
    <property type="nucleotide sequence ID" value="NM_019113.4"/>
</dbReference>
<dbReference type="PDB" id="5VAQ">
    <property type="method" value="X-ray"/>
    <property type="resolution" value="2.61 A"/>
    <property type="chains" value="C=186-209"/>
</dbReference>
<dbReference type="PDB" id="6M6E">
    <property type="method" value="NMR"/>
    <property type="chains" value="A=42-169"/>
</dbReference>
<dbReference type="PDB" id="6M6F">
    <property type="method" value="NMR"/>
    <property type="chains" value="A=42-164"/>
</dbReference>
<dbReference type="PDBsum" id="5VAQ"/>
<dbReference type="PDBsum" id="6M6E"/>
<dbReference type="PDBsum" id="6M6F"/>
<dbReference type="SMR" id="Q9NSA1"/>
<dbReference type="BioGRID" id="117672">
    <property type="interactions" value="11"/>
</dbReference>
<dbReference type="CORUM" id="Q9NSA1"/>
<dbReference type="FunCoup" id="Q9NSA1">
    <property type="interactions" value="904"/>
</dbReference>
<dbReference type="IntAct" id="Q9NSA1">
    <property type="interactions" value="14"/>
</dbReference>
<dbReference type="MINT" id="Q9NSA1"/>
<dbReference type="STRING" id="9606.ENSP00000471477"/>
<dbReference type="BioMuta" id="FGF21"/>
<dbReference type="DMDM" id="13626703"/>
<dbReference type="MassIVE" id="Q9NSA1"/>
<dbReference type="PaxDb" id="9606-ENSP00000471477"/>
<dbReference type="PeptideAtlas" id="Q9NSA1"/>
<dbReference type="Antibodypedia" id="31805">
    <property type="antibodies" value="835 antibodies from 37 providers"/>
</dbReference>
<dbReference type="DNASU" id="26291"/>
<dbReference type="Ensembl" id="ENST00000222157.5">
    <property type="protein sequence ID" value="ENSP00000222157.3"/>
    <property type="gene ID" value="ENSG00000105550.10"/>
</dbReference>
<dbReference type="Ensembl" id="ENST00000593756.6">
    <property type="protein sequence ID" value="ENSP00000471477.1"/>
    <property type="gene ID" value="ENSG00000105550.10"/>
</dbReference>
<dbReference type="GeneID" id="26291"/>
<dbReference type="KEGG" id="hsa:26291"/>
<dbReference type="MANE-Select" id="ENST00000593756.6">
    <property type="protein sequence ID" value="ENSP00000471477.1"/>
    <property type="RefSeq nucleotide sequence ID" value="NM_019113.4"/>
    <property type="RefSeq protein sequence ID" value="NP_061986.1"/>
</dbReference>
<dbReference type="UCSC" id="uc002pkn.2">
    <property type="organism name" value="human"/>
</dbReference>
<dbReference type="AGR" id="HGNC:3678"/>
<dbReference type="CTD" id="26291"/>
<dbReference type="DisGeNET" id="26291"/>
<dbReference type="GeneCards" id="FGF21"/>
<dbReference type="HGNC" id="HGNC:3678">
    <property type="gene designation" value="FGF21"/>
</dbReference>
<dbReference type="HPA" id="ENSG00000105550">
    <property type="expression patterns" value="Tissue enriched (liver)"/>
</dbReference>
<dbReference type="MIM" id="609436">
    <property type="type" value="gene"/>
</dbReference>
<dbReference type="neXtProt" id="NX_Q9NSA1"/>
<dbReference type="OpenTargets" id="ENSG00000105550"/>
<dbReference type="PharmGKB" id="PA28117"/>
<dbReference type="VEuPathDB" id="HostDB:ENSG00000105550"/>
<dbReference type="eggNOG" id="KOG3885">
    <property type="taxonomic scope" value="Eukaryota"/>
</dbReference>
<dbReference type="GeneTree" id="ENSGT00940000161866"/>
<dbReference type="HOGENOM" id="CLU_094251_2_0_1"/>
<dbReference type="InParanoid" id="Q9NSA1"/>
<dbReference type="OMA" id="EEACNFH"/>
<dbReference type="OrthoDB" id="5987799at2759"/>
<dbReference type="PAN-GO" id="Q9NSA1">
    <property type="GO annotations" value="11 GO annotations based on evolutionary models"/>
</dbReference>
<dbReference type="PhylomeDB" id="Q9NSA1"/>
<dbReference type="TreeFam" id="TF335872"/>
<dbReference type="PathwayCommons" id="Q9NSA1"/>
<dbReference type="Reactome" id="R-HSA-189200">
    <property type="pathway name" value="Cellular hexose transport"/>
</dbReference>
<dbReference type="Reactome" id="R-HSA-8963889">
    <property type="pathway name" value="Assembly of active LPL and LIPC lipase complexes"/>
</dbReference>
<dbReference type="SignaLink" id="Q9NSA1"/>
<dbReference type="SIGNOR" id="Q9NSA1"/>
<dbReference type="BioGRID-ORCS" id="26291">
    <property type="hits" value="8 hits in 1145 CRISPR screens"/>
</dbReference>
<dbReference type="GeneWiki" id="FGF21"/>
<dbReference type="GenomeRNAi" id="26291"/>
<dbReference type="Pharos" id="Q9NSA1">
    <property type="development level" value="Tbio"/>
</dbReference>
<dbReference type="PRO" id="PR:Q9NSA1"/>
<dbReference type="Proteomes" id="UP000005640">
    <property type="component" value="Chromosome 19"/>
</dbReference>
<dbReference type="RNAct" id="Q9NSA1">
    <property type="molecule type" value="protein"/>
</dbReference>
<dbReference type="Bgee" id="ENSG00000105550">
    <property type="expression patterns" value="Expressed in right lobe of liver and 32 other cell types or tissues"/>
</dbReference>
<dbReference type="GO" id="GO:0005737">
    <property type="term" value="C:cytoplasm"/>
    <property type="evidence" value="ECO:0000318"/>
    <property type="project" value="GO_Central"/>
</dbReference>
<dbReference type="GO" id="GO:0005576">
    <property type="term" value="C:extracellular region"/>
    <property type="evidence" value="ECO:0000304"/>
    <property type="project" value="ProtInc"/>
</dbReference>
<dbReference type="GO" id="GO:0005615">
    <property type="term" value="C:extracellular space"/>
    <property type="evidence" value="ECO:0000318"/>
    <property type="project" value="GO_Central"/>
</dbReference>
<dbReference type="GO" id="GO:0005104">
    <property type="term" value="F:fibroblast growth factor receptor binding"/>
    <property type="evidence" value="ECO:0000318"/>
    <property type="project" value="GO_Central"/>
</dbReference>
<dbReference type="GO" id="GO:0008083">
    <property type="term" value="F:growth factor activity"/>
    <property type="evidence" value="ECO:0000318"/>
    <property type="project" value="GO_Central"/>
</dbReference>
<dbReference type="GO" id="GO:0007267">
    <property type="term" value="P:cell-cell signaling"/>
    <property type="evidence" value="ECO:0000304"/>
    <property type="project" value="ProtInc"/>
</dbReference>
<dbReference type="GO" id="GO:0008543">
    <property type="term" value="P:fibroblast growth factor receptor signaling pathway"/>
    <property type="evidence" value="ECO:0000318"/>
    <property type="project" value="GO_Central"/>
</dbReference>
<dbReference type="GO" id="GO:0022008">
    <property type="term" value="P:neurogenesis"/>
    <property type="evidence" value="ECO:0000318"/>
    <property type="project" value="GO_Central"/>
</dbReference>
<dbReference type="GO" id="GO:0008284">
    <property type="term" value="P:positive regulation of cell population proliferation"/>
    <property type="evidence" value="ECO:0000318"/>
    <property type="project" value="GO_Central"/>
</dbReference>
<dbReference type="GO" id="GO:0120162">
    <property type="term" value="P:positive regulation of cold-induced thermogenesis"/>
    <property type="evidence" value="ECO:0000250"/>
    <property type="project" value="YuBioLab"/>
</dbReference>
<dbReference type="GO" id="GO:0046326">
    <property type="term" value="P:positive regulation of D-glucose import"/>
    <property type="evidence" value="ECO:0000314"/>
    <property type="project" value="UniProtKB"/>
</dbReference>
<dbReference type="GO" id="GO:0070374">
    <property type="term" value="P:positive regulation of ERK1 and ERK2 cascade"/>
    <property type="evidence" value="ECO:0000314"/>
    <property type="project" value="UniProtKB"/>
</dbReference>
<dbReference type="GO" id="GO:0043410">
    <property type="term" value="P:positive regulation of MAPK cascade"/>
    <property type="evidence" value="ECO:0000318"/>
    <property type="project" value="GO_Central"/>
</dbReference>
<dbReference type="GO" id="GO:0090080">
    <property type="term" value="P:positive regulation of MAPKKK cascade by fibroblast growth factor receptor signaling pathway"/>
    <property type="evidence" value="ECO:0007669"/>
    <property type="project" value="Ensembl"/>
</dbReference>
<dbReference type="GO" id="GO:0030334">
    <property type="term" value="P:regulation of cell migration"/>
    <property type="evidence" value="ECO:0000318"/>
    <property type="project" value="GO_Central"/>
</dbReference>
<dbReference type="GO" id="GO:0010988">
    <property type="term" value="P:regulation of low-density lipoprotein particle clearance"/>
    <property type="evidence" value="ECO:0000303"/>
    <property type="project" value="BHF-UCL"/>
</dbReference>
<dbReference type="GO" id="GO:0007165">
    <property type="term" value="P:signal transduction"/>
    <property type="evidence" value="ECO:0000304"/>
    <property type="project" value="ProtInc"/>
</dbReference>
<dbReference type="CDD" id="cd23332">
    <property type="entry name" value="beta-trefoil_FGF21"/>
    <property type="match status" value="1"/>
</dbReference>
<dbReference type="FunFam" id="2.80.10.50:FF:000053">
    <property type="entry name" value="Fibroblast growth factor"/>
    <property type="match status" value="1"/>
</dbReference>
<dbReference type="Gene3D" id="2.80.10.50">
    <property type="match status" value="1"/>
</dbReference>
<dbReference type="InterPro" id="IPR035444">
    <property type="entry name" value="FGF15/19/21"/>
</dbReference>
<dbReference type="InterPro" id="IPR002209">
    <property type="entry name" value="Fibroblast_GF_fam"/>
</dbReference>
<dbReference type="InterPro" id="IPR008996">
    <property type="entry name" value="IL1/FGF"/>
</dbReference>
<dbReference type="PANTHER" id="PTHR11486">
    <property type="entry name" value="FIBROBLAST GROWTH FACTOR"/>
    <property type="match status" value="1"/>
</dbReference>
<dbReference type="Pfam" id="PF00167">
    <property type="entry name" value="FGF"/>
    <property type="match status" value="1"/>
</dbReference>
<dbReference type="PIRSF" id="PIRSF037961">
    <property type="entry name" value="FGF-19_FGF-21"/>
    <property type="match status" value="1"/>
</dbReference>
<dbReference type="PRINTS" id="PR00263">
    <property type="entry name" value="HBGFFGF"/>
</dbReference>
<dbReference type="PRINTS" id="PR00262">
    <property type="entry name" value="IL1HBGF"/>
</dbReference>
<dbReference type="SMART" id="SM00442">
    <property type="entry name" value="FGF"/>
    <property type="match status" value="1"/>
</dbReference>
<dbReference type="SUPFAM" id="SSF50353">
    <property type="entry name" value="Cytokine"/>
    <property type="match status" value="1"/>
</dbReference>
<dbReference type="PROSITE" id="PS00247">
    <property type="entry name" value="HBGF_FGF"/>
    <property type="match status" value="1"/>
</dbReference>
<comment type="function">
    <text evidence="1 4 5">Stimulates glucose uptake in differentiated adipocytes via the induction of glucose transporter SLC2A1/GLUT1 expression (but not SLC2A4/GLUT4 expression). Activity requires the presence of KLB. Regulates systemic glucose homeostasis and insulin sensitivity.</text>
</comment>
<comment type="subunit">
    <text evidence="4 6 7">Interacts (via C-terminus) with KLB; this interaction is direct. Interacts with FGFR4.</text>
</comment>
<comment type="interaction">
    <interactant intactId="EBI-3909329">
        <id>Q9NSA1</id>
    </interactant>
    <interactant intactId="EBI-10988864">
        <id>P46379-2</id>
        <label>BAG6</label>
    </interactant>
    <organismsDiffer>false</organismsDiffer>
    <experiments>3</experiments>
</comment>
<comment type="interaction">
    <interactant intactId="EBI-3909329">
        <id>Q9NSA1</id>
    </interactant>
    <interactant intactId="EBI-718729">
        <id>P55212</id>
        <label>CASP6</label>
    </interactant>
    <organismsDiffer>false</organismsDiffer>
    <experiments>3</experiments>
</comment>
<comment type="interaction">
    <interactant intactId="EBI-3909329">
        <id>Q9NSA1</id>
    </interactant>
    <interactant intactId="EBI-395638">
        <id>O14645</id>
        <label>DNALI1</label>
    </interactant>
    <organismsDiffer>false</organismsDiffer>
    <experiments>3</experiments>
</comment>
<comment type="interaction">
    <interactant intactId="EBI-3909329">
        <id>Q9NSA1</id>
    </interactant>
    <interactant intactId="EBI-10226858">
        <id>Q0VDC6</id>
        <label>FKBP1A</label>
    </interactant>
    <organismsDiffer>false</organismsDiffer>
    <experiments>3</experiments>
</comment>
<comment type="interaction">
    <interactant intactId="EBI-3909329">
        <id>Q9NSA1</id>
    </interactant>
    <interactant intactId="EBI-356991">
        <id>P54652</id>
        <label>HSPA2</label>
    </interactant>
    <organismsDiffer>false</organismsDiffer>
    <experiments>4</experiments>
</comment>
<comment type="interaction">
    <interactant intactId="EBI-3909329">
        <id>Q9NSA1</id>
    </interactant>
    <interactant intactId="EBI-8515198">
        <id>Q86Z14</id>
        <label>KLB</label>
    </interactant>
    <organismsDiffer>false</organismsDiffer>
    <experiments>2</experiments>
</comment>
<comment type="interaction">
    <interactant intactId="EBI-3909329">
        <id>Q9NSA1</id>
    </interactant>
    <interactant intactId="EBI-948266">
        <id>O14901</id>
        <label>KLF11</label>
    </interactant>
    <organismsDiffer>false</organismsDiffer>
    <experiments>3</experiments>
</comment>
<comment type="interaction">
    <interactant intactId="EBI-3909329">
        <id>Q9NSA1</id>
    </interactant>
    <interactant intactId="EBI-21591415">
        <id>P13473-2</id>
        <label>LAMP2</label>
    </interactant>
    <organismsDiffer>false</organismsDiffer>
    <experiments>3</experiments>
</comment>
<comment type="interaction">
    <interactant intactId="EBI-3909329">
        <id>Q9NSA1</id>
    </interactant>
    <interactant intactId="EBI-347996">
        <id>O43765</id>
        <label>SGTA</label>
    </interactant>
    <organismsDiffer>false</organismsDiffer>
    <experiments>3</experiments>
</comment>
<comment type="interaction">
    <interactant intactId="EBI-3909329">
        <id>Q9NSA1</id>
    </interactant>
    <interactant intactId="EBI-744081">
        <id>Q96EQ0</id>
        <label>SGTB</label>
    </interactant>
    <organismsDiffer>false</organismsDiffer>
    <experiments>3</experiments>
</comment>
<comment type="subcellular location">
    <subcellularLocation>
        <location evidence="1">Secreted</location>
    </subcellularLocation>
</comment>
<comment type="similarity">
    <text evidence="9">Belongs to the heparin-binding growth factors family.</text>
</comment>